<protein>
    <recommendedName>
        <fullName evidence="1">4-hydroxy-2-oxovalerate aldolase</fullName>
        <shortName evidence="1">HOA</shortName>
        <ecNumber evidence="1">4.1.3.39</ecNumber>
    </recommendedName>
    <alternativeName>
        <fullName evidence="1">4-hydroxy-2-keto-pentanoic acid aldolase</fullName>
    </alternativeName>
    <alternativeName>
        <fullName evidence="1">4-hydroxy-2-oxopentanoate aldolase</fullName>
    </alternativeName>
</protein>
<proteinExistence type="inferred from homology"/>
<organism>
    <name type="scientific">Pseudoalteromonas translucida (strain TAC 125)</name>
    <dbReference type="NCBI Taxonomy" id="326442"/>
    <lineage>
        <taxon>Bacteria</taxon>
        <taxon>Pseudomonadati</taxon>
        <taxon>Pseudomonadota</taxon>
        <taxon>Gammaproteobacteria</taxon>
        <taxon>Alteromonadales</taxon>
        <taxon>Pseudoalteromonadaceae</taxon>
        <taxon>Pseudoalteromonas</taxon>
    </lineage>
</organism>
<accession>Q3IEQ9</accession>
<gene>
    <name type="primary">mhpE</name>
    <name type="ordered locus">PSHAa2143</name>
</gene>
<dbReference type="EC" id="4.1.3.39" evidence="1"/>
<dbReference type="EMBL" id="CR954246">
    <property type="protein sequence ID" value="CAI87199.1"/>
    <property type="molecule type" value="Genomic_DNA"/>
</dbReference>
<dbReference type="SMR" id="Q3IEQ9"/>
<dbReference type="STRING" id="326442.PSHAa2143"/>
<dbReference type="KEGG" id="pha:PSHAa2143"/>
<dbReference type="eggNOG" id="COG0119">
    <property type="taxonomic scope" value="Bacteria"/>
</dbReference>
<dbReference type="HOGENOM" id="CLU_049173_0_0_6"/>
<dbReference type="BioCyc" id="PHAL326442:PSHA_RS10575-MONOMER"/>
<dbReference type="Proteomes" id="UP000006843">
    <property type="component" value="Chromosome I"/>
</dbReference>
<dbReference type="GO" id="GO:0003852">
    <property type="term" value="F:2-isopropylmalate synthase activity"/>
    <property type="evidence" value="ECO:0007669"/>
    <property type="project" value="TreeGrafter"/>
</dbReference>
<dbReference type="GO" id="GO:0008701">
    <property type="term" value="F:4-hydroxy-2-oxovalerate aldolase activity"/>
    <property type="evidence" value="ECO:0007669"/>
    <property type="project" value="UniProtKB-UniRule"/>
</dbReference>
<dbReference type="GO" id="GO:0030145">
    <property type="term" value="F:manganese ion binding"/>
    <property type="evidence" value="ECO:0007669"/>
    <property type="project" value="UniProtKB-UniRule"/>
</dbReference>
<dbReference type="GO" id="GO:0009056">
    <property type="term" value="P:catabolic process"/>
    <property type="evidence" value="ECO:0007669"/>
    <property type="project" value="UniProtKB-KW"/>
</dbReference>
<dbReference type="GO" id="GO:0009098">
    <property type="term" value="P:L-leucine biosynthetic process"/>
    <property type="evidence" value="ECO:0007669"/>
    <property type="project" value="TreeGrafter"/>
</dbReference>
<dbReference type="CDD" id="cd07943">
    <property type="entry name" value="DRE_TIM_HOA"/>
    <property type="match status" value="1"/>
</dbReference>
<dbReference type="Gene3D" id="1.10.8.60">
    <property type="match status" value="1"/>
</dbReference>
<dbReference type="Gene3D" id="3.20.20.70">
    <property type="entry name" value="Aldolase class I"/>
    <property type="match status" value="1"/>
</dbReference>
<dbReference type="HAMAP" id="MF_01656">
    <property type="entry name" value="HOA"/>
    <property type="match status" value="1"/>
</dbReference>
<dbReference type="InterPro" id="IPR050073">
    <property type="entry name" value="2-IPM_HCS-like"/>
</dbReference>
<dbReference type="InterPro" id="IPR017629">
    <property type="entry name" value="4OH_2_O-val_aldolase"/>
</dbReference>
<dbReference type="InterPro" id="IPR013785">
    <property type="entry name" value="Aldolase_TIM"/>
</dbReference>
<dbReference type="InterPro" id="IPR012425">
    <property type="entry name" value="DmpG_comm"/>
</dbReference>
<dbReference type="InterPro" id="IPR035685">
    <property type="entry name" value="DRE_TIM_HOA"/>
</dbReference>
<dbReference type="InterPro" id="IPR000891">
    <property type="entry name" value="PYR_CT"/>
</dbReference>
<dbReference type="NCBIfam" id="TIGR03217">
    <property type="entry name" value="4OH_2_O_val_ald"/>
    <property type="match status" value="1"/>
</dbReference>
<dbReference type="NCBIfam" id="NF006049">
    <property type="entry name" value="PRK08195.1"/>
    <property type="match status" value="1"/>
</dbReference>
<dbReference type="PANTHER" id="PTHR10277:SF9">
    <property type="entry name" value="2-ISOPROPYLMALATE SYNTHASE 1, CHLOROPLASTIC-RELATED"/>
    <property type="match status" value="1"/>
</dbReference>
<dbReference type="PANTHER" id="PTHR10277">
    <property type="entry name" value="HOMOCITRATE SYNTHASE-RELATED"/>
    <property type="match status" value="1"/>
</dbReference>
<dbReference type="Pfam" id="PF07836">
    <property type="entry name" value="DmpG_comm"/>
    <property type="match status" value="1"/>
</dbReference>
<dbReference type="Pfam" id="PF00682">
    <property type="entry name" value="HMGL-like"/>
    <property type="match status" value="1"/>
</dbReference>
<dbReference type="SUPFAM" id="SSF51569">
    <property type="entry name" value="Aldolase"/>
    <property type="match status" value="1"/>
</dbReference>
<dbReference type="SUPFAM" id="SSF89000">
    <property type="entry name" value="post-HMGL domain-like"/>
    <property type="match status" value="1"/>
</dbReference>
<dbReference type="PROSITE" id="PS50991">
    <property type="entry name" value="PYR_CT"/>
    <property type="match status" value="1"/>
</dbReference>
<reference key="1">
    <citation type="journal article" date="2005" name="Genome Res.">
        <title>Coping with cold: the genome of the versatile marine Antarctica bacterium Pseudoalteromonas haloplanktis TAC125.</title>
        <authorList>
            <person name="Medigue C."/>
            <person name="Krin E."/>
            <person name="Pascal G."/>
            <person name="Barbe V."/>
            <person name="Bernsel A."/>
            <person name="Bertin P.N."/>
            <person name="Cheung F."/>
            <person name="Cruveiller S."/>
            <person name="D'Amico S."/>
            <person name="Duilio A."/>
            <person name="Fang G."/>
            <person name="Feller G."/>
            <person name="Ho C."/>
            <person name="Mangenot S."/>
            <person name="Marino G."/>
            <person name="Nilsson J."/>
            <person name="Parrilli E."/>
            <person name="Rocha E.P.C."/>
            <person name="Rouy Z."/>
            <person name="Sekowska A."/>
            <person name="Tutino M.L."/>
            <person name="Vallenet D."/>
            <person name="von Heijne G."/>
            <person name="Danchin A."/>
        </authorList>
    </citation>
    <scope>NUCLEOTIDE SEQUENCE [LARGE SCALE GENOMIC DNA]</scope>
    <source>
        <strain>TAC 125</strain>
    </source>
</reference>
<name>HOA_PSET1</name>
<comment type="catalytic activity">
    <reaction evidence="1">
        <text>(S)-4-hydroxy-2-oxopentanoate = acetaldehyde + pyruvate</text>
        <dbReference type="Rhea" id="RHEA:22624"/>
        <dbReference type="ChEBI" id="CHEBI:15343"/>
        <dbReference type="ChEBI" id="CHEBI:15361"/>
        <dbReference type="ChEBI" id="CHEBI:73143"/>
        <dbReference type="EC" id="4.1.3.39"/>
    </reaction>
</comment>
<comment type="similarity">
    <text evidence="1">Belongs to the 4-hydroxy-2-oxovalerate aldolase family.</text>
</comment>
<keyword id="KW-0058">Aromatic hydrocarbons catabolism</keyword>
<keyword id="KW-0456">Lyase</keyword>
<keyword id="KW-0464">Manganese</keyword>
<keyword id="KW-0479">Metal-binding</keyword>
<keyword id="KW-1185">Reference proteome</keyword>
<evidence type="ECO:0000255" key="1">
    <source>
        <dbReference type="HAMAP-Rule" id="MF_01656"/>
    </source>
</evidence>
<feature type="chain" id="PRO_0000387879" description="4-hydroxy-2-oxovalerate aldolase">
    <location>
        <begin position="1"/>
        <end position="344"/>
    </location>
</feature>
<feature type="domain" description="Pyruvate carboxyltransferase" evidence="1">
    <location>
        <begin position="8"/>
        <end position="260"/>
    </location>
</feature>
<feature type="active site" description="Proton acceptor" evidence="1">
    <location>
        <position position="20"/>
    </location>
</feature>
<feature type="binding site" evidence="1">
    <location>
        <begin position="16"/>
        <end position="17"/>
    </location>
    <ligand>
        <name>substrate</name>
    </ligand>
</feature>
<feature type="binding site" evidence="1">
    <location>
        <position position="17"/>
    </location>
    <ligand>
        <name>Mn(2+)</name>
        <dbReference type="ChEBI" id="CHEBI:29035"/>
    </ligand>
</feature>
<feature type="binding site" evidence="1">
    <location>
        <position position="170"/>
    </location>
    <ligand>
        <name>substrate</name>
    </ligand>
</feature>
<feature type="binding site" evidence="1">
    <location>
        <position position="199"/>
    </location>
    <ligand>
        <name>Mn(2+)</name>
        <dbReference type="ChEBI" id="CHEBI:29035"/>
    </ligand>
</feature>
<feature type="binding site" evidence="1">
    <location>
        <position position="199"/>
    </location>
    <ligand>
        <name>substrate</name>
    </ligand>
</feature>
<feature type="binding site" evidence="1">
    <location>
        <position position="201"/>
    </location>
    <ligand>
        <name>Mn(2+)</name>
        <dbReference type="ChEBI" id="CHEBI:29035"/>
    </ligand>
</feature>
<feature type="binding site" evidence="1">
    <location>
        <position position="290"/>
    </location>
    <ligand>
        <name>substrate</name>
    </ligand>
</feature>
<feature type="site" description="Transition state stabilizer" evidence="1">
    <location>
        <position position="16"/>
    </location>
</feature>
<sequence>MDLKGKKVTLHDMSLRDGMHAKQHQISLDEMVSIATGLDQAGIPLIEVTHGDGLGGSSLNYGFPAHTDEEYLSAVVPKMTQAKVSALLIPGIGTVDHLKMAYDHGVSTIRVATHCTEADVSEQHISAARKMGLDTVGFLMMAHMISPEELLAQAKLMESYGANCIYCTDSAGYMLPDDVSTRIALLRSELNSETEIGFHGHHNLGMSIPNSLAAIEMGANRIDGSVAGLGAGAGNTPLEVFTAVLDRMAVNHGIDLYKIMDVAEDLVMPMMDQPIRIDRNSLTLGYAGVYSSFLLFAERAEKKYGVPARDILLELGRLKTVGGQEDMIDDTAMTMAKALKAAKA</sequence>